<proteinExistence type="inferred from homology"/>
<gene>
    <name evidence="1" type="primary">divIB</name>
    <name type="ordered locus">Bcer98_2558</name>
</gene>
<organism>
    <name type="scientific">Bacillus cytotoxicus (strain DSM 22905 / CIP 110041 / 391-98 / NVH 391-98)</name>
    <dbReference type="NCBI Taxonomy" id="315749"/>
    <lineage>
        <taxon>Bacteria</taxon>
        <taxon>Bacillati</taxon>
        <taxon>Bacillota</taxon>
        <taxon>Bacilli</taxon>
        <taxon>Bacillales</taxon>
        <taxon>Bacillaceae</taxon>
        <taxon>Bacillus</taxon>
        <taxon>Bacillus cereus group</taxon>
    </lineage>
</organism>
<comment type="function">
    <text evidence="1">Cell division protein that may be involved in stabilizing or promoting the assembly of the division complex.</text>
</comment>
<comment type="subcellular location">
    <subcellularLocation>
        <location evidence="1">Cell membrane</location>
        <topology evidence="1">Single-pass type II membrane protein</topology>
    </subcellularLocation>
    <text evidence="1">Localizes to the division septum.</text>
</comment>
<comment type="similarity">
    <text evidence="1">Belongs to the FtsQ/DivIB family. DivIB subfamily.</text>
</comment>
<feature type="chain" id="PRO_0000414758" description="Cell division protein DivIB">
    <location>
        <begin position="1"/>
        <end position="255"/>
    </location>
</feature>
<feature type="topological domain" description="Cytoplasmic" evidence="1">
    <location>
        <begin position="1"/>
        <end position="30"/>
    </location>
</feature>
<feature type="transmembrane region" description="Helical" evidence="1">
    <location>
        <begin position="31"/>
        <end position="51"/>
    </location>
</feature>
<feature type="topological domain" description="Extracellular" evidence="1">
    <location>
        <begin position="52"/>
        <end position="255"/>
    </location>
</feature>
<feature type="domain" description="POTRA" evidence="2">
    <location>
        <begin position="53"/>
        <end position="121"/>
    </location>
</feature>
<evidence type="ECO:0000255" key="1">
    <source>
        <dbReference type="HAMAP-Rule" id="MF_00912"/>
    </source>
</evidence>
<evidence type="ECO:0000255" key="2">
    <source>
        <dbReference type="PROSITE-ProRule" id="PRU01115"/>
    </source>
</evidence>
<name>DIVIB_BACCN</name>
<sequence length="255" mass="29773">MKNSKVIKLQDRVPKLKNQKKRNKPPVNHRLILYISILFLLVLFLIYFRSPLSNIKKISVFGNHYMTDEQVMEKSGITYKTSYFRVTARQAEENLKKQIEIKSVDVKKRFPNKIDIHIEEYVTIGYINKNGKLQPLLENGKTLDILPSGKLPVAAPIFEPFKEEKMKELISELEKLTPTILRSISEIRYTPTTSNESHLTLYMNEGYEVSTTIQDFAKRMEAYPLILKQIEPGRKALIDLEVATYFKYLDDEKKK</sequence>
<accession>A7GRN4</accession>
<protein>
    <recommendedName>
        <fullName evidence="1">Cell division protein DivIB</fullName>
    </recommendedName>
</protein>
<reference key="1">
    <citation type="journal article" date="2008" name="Chem. Biol. Interact.">
        <title>Extending the Bacillus cereus group genomics to putative food-borne pathogens of different toxicity.</title>
        <authorList>
            <person name="Lapidus A."/>
            <person name="Goltsman E."/>
            <person name="Auger S."/>
            <person name="Galleron N."/>
            <person name="Segurens B."/>
            <person name="Dossat C."/>
            <person name="Land M.L."/>
            <person name="Broussolle V."/>
            <person name="Brillard J."/>
            <person name="Guinebretiere M.-H."/>
            <person name="Sanchis V."/>
            <person name="Nguen-the C."/>
            <person name="Lereclus D."/>
            <person name="Richardson P."/>
            <person name="Wincker P."/>
            <person name="Weissenbach J."/>
            <person name="Ehrlich S.D."/>
            <person name="Sorokin A."/>
        </authorList>
    </citation>
    <scope>NUCLEOTIDE SEQUENCE [LARGE SCALE GENOMIC DNA]</scope>
    <source>
        <strain>DSM 22905 / CIP 110041 / 391-98 / NVH 391-98</strain>
    </source>
</reference>
<dbReference type="EMBL" id="CP000764">
    <property type="protein sequence ID" value="ABS22792.1"/>
    <property type="molecule type" value="Genomic_DNA"/>
</dbReference>
<dbReference type="RefSeq" id="WP_012094999.1">
    <property type="nucleotide sequence ID" value="NC_009674.1"/>
</dbReference>
<dbReference type="SMR" id="A7GRN4"/>
<dbReference type="STRING" id="315749.Bcer98_2558"/>
<dbReference type="GeneID" id="33897811"/>
<dbReference type="KEGG" id="bcy:Bcer98_2558"/>
<dbReference type="eggNOG" id="COG1589">
    <property type="taxonomic scope" value="Bacteria"/>
</dbReference>
<dbReference type="HOGENOM" id="CLU_046278_2_1_9"/>
<dbReference type="OrthoDB" id="1819027at2"/>
<dbReference type="Proteomes" id="UP000002300">
    <property type="component" value="Chromosome"/>
</dbReference>
<dbReference type="GO" id="GO:0032153">
    <property type="term" value="C:cell division site"/>
    <property type="evidence" value="ECO:0007669"/>
    <property type="project" value="UniProtKB-UniRule"/>
</dbReference>
<dbReference type="GO" id="GO:0005886">
    <property type="term" value="C:plasma membrane"/>
    <property type="evidence" value="ECO:0007669"/>
    <property type="project" value="UniProtKB-SubCell"/>
</dbReference>
<dbReference type="GO" id="GO:0043093">
    <property type="term" value="P:FtsZ-dependent cytokinesis"/>
    <property type="evidence" value="ECO:0007669"/>
    <property type="project" value="UniProtKB-UniRule"/>
</dbReference>
<dbReference type="Gene3D" id="3.40.50.10960">
    <property type="match status" value="1"/>
</dbReference>
<dbReference type="Gene3D" id="3.10.20.310">
    <property type="entry name" value="membrane protein fhac"/>
    <property type="match status" value="1"/>
</dbReference>
<dbReference type="HAMAP" id="MF_00912">
    <property type="entry name" value="DivIB"/>
    <property type="match status" value="1"/>
</dbReference>
<dbReference type="InterPro" id="IPR005548">
    <property type="entry name" value="Cell_div_FtsQ/DivIB_C"/>
</dbReference>
<dbReference type="InterPro" id="IPR026580">
    <property type="entry name" value="DivIB"/>
</dbReference>
<dbReference type="InterPro" id="IPR050487">
    <property type="entry name" value="FtsQ_DivIB"/>
</dbReference>
<dbReference type="InterPro" id="IPR034746">
    <property type="entry name" value="POTRA"/>
</dbReference>
<dbReference type="InterPro" id="IPR013685">
    <property type="entry name" value="POTRA_FtsQ_type"/>
</dbReference>
<dbReference type="PANTHER" id="PTHR37820">
    <property type="entry name" value="CELL DIVISION PROTEIN DIVIB"/>
    <property type="match status" value="1"/>
</dbReference>
<dbReference type="PANTHER" id="PTHR37820:SF1">
    <property type="entry name" value="CELL DIVISION PROTEIN FTSQ"/>
    <property type="match status" value="1"/>
</dbReference>
<dbReference type="Pfam" id="PF03799">
    <property type="entry name" value="FtsQ_DivIB_C"/>
    <property type="match status" value="1"/>
</dbReference>
<dbReference type="Pfam" id="PF08478">
    <property type="entry name" value="POTRA_1"/>
    <property type="match status" value="1"/>
</dbReference>
<dbReference type="PROSITE" id="PS51779">
    <property type="entry name" value="POTRA"/>
    <property type="match status" value="1"/>
</dbReference>
<keyword id="KW-0131">Cell cycle</keyword>
<keyword id="KW-0132">Cell division</keyword>
<keyword id="KW-1003">Cell membrane</keyword>
<keyword id="KW-0472">Membrane</keyword>
<keyword id="KW-0812">Transmembrane</keyword>
<keyword id="KW-1133">Transmembrane helix</keyword>